<name>Y1721_LISMC</name>
<dbReference type="EMBL" id="FM242711">
    <property type="protein sequence ID" value="CAS05481.1"/>
    <property type="molecule type" value="Genomic_DNA"/>
</dbReference>
<dbReference type="RefSeq" id="WP_003726640.1">
    <property type="nucleotide sequence ID" value="NC_012488.1"/>
</dbReference>
<dbReference type="SMR" id="C1KW06"/>
<dbReference type="KEGG" id="lmc:Lm4b_01721"/>
<dbReference type="HOGENOM" id="CLU_199533_1_0_9"/>
<dbReference type="HAMAP" id="MF_00829">
    <property type="entry name" value="UPF0435"/>
    <property type="match status" value="1"/>
</dbReference>
<dbReference type="InterPro" id="IPR009507">
    <property type="entry name" value="UPF0435"/>
</dbReference>
<dbReference type="Pfam" id="PF06569">
    <property type="entry name" value="DUF1128"/>
    <property type="match status" value="1"/>
</dbReference>
<organism>
    <name type="scientific">Listeria monocytogenes serotype 4b (strain CLIP80459)</name>
    <dbReference type="NCBI Taxonomy" id="568819"/>
    <lineage>
        <taxon>Bacteria</taxon>
        <taxon>Bacillati</taxon>
        <taxon>Bacillota</taxon>
        <taxon>Bacilli</taxon>
        <taxon>Bacillales</taxon>
        <taxon>Listeriaceae</taxon>
        <taxon>Listeria</taxon>
    </lineage>
</organism>
<reference key="1">
    <citation type="journal article" date="2012" name="BMC Genomics">
        <title>Comparative genomics and transcriptomics of lineages I, II, and III strains of Listeria monocytogenes.</title>
        <authorList>
            <person name="Hain T."/>
            <person name="Ghai R."/>
            <person name="Billion A."/>
            <person name="Kuenne C.T."/>
            <person name="Steinweg C."/>
            <person name="Izar B."/>
            <person name="Mohamed W."/>
            <person name="Mraheil M."/>
            <person name="Domann E."/>
            <person name="Schaffrath S."/>
            <person name="Karst U."/>
            <person name="Goesmann A."/>
            <person name="Oehm S."/>
            <person name="Puhler A."/>
            <person name="Merkl R."/>
            <person name="Vorwerk S."/>
            <person name="Glaser P."/>
            <person name="Garrido P."/>
            <person name="Rusniok C."/>
            <person name="Buchrieser C."/>
            <person name="Goebel W."/>
            <person name="Chakraborty T."/>
        </authorList>
    </citation>
    <scope>NUCLEOTIDE SEQUENCE [LARGE SCALE GENOMIC DNA]</scope>
    <source>
        <strain>CLIP80459</strain>
    </source>
</reference>
<sequence length="73" mass="8681">MNLETPSQENLNFMLTEITTKLKMVNVGVFENLELDSVDYNALIDIYQLIKRKSNFSPREMQLFAEELRRIRK</sequence>
<protein>
    <recommendedName>
        <fullName evidence="1">UPF0435 protein Lm4b_01721</fullName>
    </recommendedName>
</protein>
<comment type="similarity">
    <text evidence="1">Belongs to the UPF0435 family.</text>
</comment>
<feature type="chain" id="PRO_1000213136" description="UPF0435 protein Lm4b_01721">
    <location>
        <begin position="1"/>
        <end position="73"/>
    </location>
</feature>
<evidence type="ECO:0000255" key="1">
    <source>
        <dbReference type="HAMAP-Rule" id="MF_00829"/>
    </source>
</evidence>
<gene>
    <name type="ordered locus">Lm4b_01721</name>
</gene>
<accession>C1KW06</accession>
<proteinExistence type="inferred from homology"/>